<feature type="chain" id="PRO_1000054113" description="Probable cyclic pyranopterin monophosphate synthase">
    <location>
        <begin position="1"/>
        <end position="158"/>
    </location>
</feature>
<feature type="active site" evidence="1">
    <location>
        <position position="126"/>
    </location>
</feature>
<feature type="binding site" evidence="1">
    <location>
        <begin position="75"/>
        <end position="77"/>
    </location>
    <ligand>
        <name>substrate</name>
    </ligand>
</feature>
<feature type="binding site" evidence="1">
    <location>
        <begin position="111"/>
        <end position="112"/>
    </location>
    <ligand>
        <name>substrate</name>
    </ligand>
</feature>
<reference key="1">
    <citation type="journal article" date="2009" name="Stand. Genomic Sci.">
        <title>Complete genome sequence of Methanocorpusculum labreanum type strain Z.</title>
        <authorList>
            <person name="Anderson I.J."/>
            <person name="Sieprawska-Lupa M."/>
            <person name="Goltsman E."/>
            <person name="Lapidus A."/>
            <person name="Copeland A."/>
            <person name="Glavina Del Rio T."/>
            <person name="Tice H."/>
            <person name="Dalin E."/>
            <person name="Barry K."/>
            <person name="Pitluck S."/>
            <person name="Hauser L."/>
            <person name="Land M."/>
            <person name="Lucas S."/>
            <person name="Richardson P."/>
            <person name="Whitman W.B."/>
            <person name="Kyrpides N.C."/>
        </authorList>
    </citation>
    <scope>NUCLEOTIDE SEQUENCE [LARGE SCALE GENOMIC DNA]</scope>
    <source>
        <strain>ATCC 43576 / DSM 4855 / Z</strain>
    </source>
</reference>
<gene>
    <name evidence="1" type="primary">moaC</name>
    <name type="ordered locus">Mlab_1345</name>
</gene>
<sequence length="158" mass="17325">MPVFTHLNENNEVHMVDVTPKPDVSREATAKGRIYLRPETLAAIAEGRVLKGNVLATAQVAGTLAVKQTWALIPMCHPLPVGGVTIWFEQTDEYIEAFCRVKTYGKTGIEMEALTGVSLSLLTIWDMVKSAEKDEAGQYPVTRIDGISVIEKIKGTPE</sequence>
<evidence type="ECO:0000255" key="1">
    <source>
        <dbReference type="HAMAP-Rule" id="MF_01224"/>
    </source>
</evidence>
<accession>A2ST56</accession>
<comment type="function">
    <text evidence="1">Catalyzes the conversion of (8S)-3',8-cyclo-7,8-dihydroguanosine 5'-triphosphate to cyclic pyranopterin monophosphate (cPMP).</text>
</comment>
<comment type="catalytic activity">
    <reaction evidence="1">
        <text>(8S)-3',8-cyclo-7,8-dihydroguanosine 5'-triphosphate = cyclic pyranopterin phosphate + diphosphate</text>
        <dbReference type="Rhea" id="RHEA:49580"/>
        <dbReference type="ChEBI" id="CHEBI:33019"/>
        <dbReference type="ChEBI" id="CHEBI:59648"/>
        <dbReference type="ChEBI" id="CHEBI:131766"/>
        <dbReference type="EC" id="4.6.1.17"/>
    </reaction>
</comment>
<comment type="pathway">
    <text evidence="1">Cofactor biosynthesis; molybdopterin biosynthesis.</text>
</comment>
<comment type="subunit">
    <text evidence="1">Homohexamer; trimer of dimers.</text>
</comment>
<comment type="similarity">
    <text evidence="1">Belongs to the MoaC family.</text>
</comment>
<keyword id="KW-0456">Lyase</keyword>
<keyword id="KW-0501">Molybdenum cofactor biosynthesis</keyword>
<keyword id="KW-1185">Reference proteome</keyword>
<name>MOAC_METLZ</name>
<dbReference type="EC" id="4.6.1.17" evidence="1"/>
<dbReference type="EMBL" id="CP000559">
    <property type="protein sequence ID" value="ABN07512.1"/>
    <property type="molecule type" value="Genomic_DNA"/>
</dbReference>
<dbReference type="RefSeq" id="WP_011833715.1">
    <property type="nucleotide sequence ID" value="NC_008942.1"/>
</dbReference>
<dbReference type="SMR" id="A2ST56"/>
<dbReference type="STRING" id="410358.Mlab_1345"/>
<dbReference type="GeneID" id="4795095"/>
<dbReference type="KEGG" id="mla:Mlab_1345"/>
<dbReference type="eggNOG" id="arCOG01530">
    <property type="taxonomic scope" value="Archaea"/>
</dbReference>
<dbReference type="HOGENOM" id="CLU_074693_1_2_2"/>
<dbReference type="OrthoDB" id="10067at2157"/>
<dbReference type="UniPathway" id="UPA00344"/>
<dbReference type="Proteomes" id="UP000000365">
    <property type="component" value="Chromosome"/>
</dbReference>
<dbReference type="GO" id="GO:0061799">
    <property type="term" value="F:cyclic pyranopterin monophosphate synthase activity"/>
    <property type="evidence" value="ECO:0007669"/>
    <property type="project" value="UniProtKB-UniRule"/>
</dbReference>
<dbReference type="GO" id="GO:0006777">
    <property type="term" value="P:Mo-molybdopterin cofactor biosynthetic process"/>
    <property type="evidence" value="ECO:0007669"/>
    <property type="project" value="UniProtKB-UniRule"/>
</dbReference>
<dbReference type="CDD" id="cd01419">
    <property type="entry name" value="MoaC_A"/>
    <property type="match status" value="1"/>
</dbReference>
<dbReference type="Gene3D" id="3.30.70.640">
    <property type="entry name" value="Molybdopterin cofactor biosynthesis C (MoaC) domain"/>
    <property type="match status" value="1"/>
</dbReference>
<dbReference type="HAMAP" id="MF_01224_A">
    <property type="entry name" value="MoaC_A"/>
    <property type="match status" value="1"/>
</dbReference>
<dbReference type="InterPro" id="IPR023047">
    <property type="entry name" value="Mo_CF_biosynth-C_arc"/>
</dbReference>
<dbReference type="InterPro" id="IPR023045">
    <property type="entry name" value="MoaC"/>
</dbReference>
<dbReference type="InterPro" id="IPR036522">
    <property type="entry name" value="MoaC_sf"/>
</dbReference>
<dbReference type="InterPro" id="IPR002820">
    <property type="entry name" value="Mopterin_CF_biosynth-C_dom"/>
</dbReference>
<dbReference type="NCBIfam" id="TIGR00581">
    <property type="entry name" value="moaC"/>
    <property type="match status" value="1"/>
</dbReference>
<dbReference type="NCBIfam" id="NF006870">
    <property type="entry name" value="PRK09364.1"/>
    <property type="match status" value="1"/>
</dbReference>
<dbReference type="NCBIfam" id="NF008999">
    <property type="entry name" value="PRK12343.1"/>
    <property type="match status" value="1"/>
</dbReference>
<dbReference type="Pfam" id="PF01967">
    <property type="entry name" value="MoaC"/>
    <property type="match status" value="1"/>
</dbReference>
<dbReference type="SUPFAM" id="SSF55040">
    <property type="entry name" value="Molybdenum cofactor biosynthesis protein C, MoaC"/>
    <property type="match status" value="1"/>
</dbReference>
<organism>
    <name type="scientific">Methanocorpusculum labreanum (strain ATCC 43576 / DSM 4855 / Z)</name>
    <dbReference type="NCBI Taxonomy" id="410358"/>
    <lineage>
        <taxon>Archaea</taxon>
        <taxon>Methanobacteriati</taxon>
        <taxon>Methanobacteriota</taxon>
        <taxon>Stenosarchaea group</taxon>
        <taxon>Methanomicrobia</taxon>
        <taxon>Methanomicrobiales</taxon>
        <taxon>Methanocorpusculaceae</taxon>
        <taxon>Methanocorpusculum</taxon>
    </lineage>
</organism>
<protein>
    <recommendedName>
        <fullName evidence="1">Probable cyclic pyranopterin monophosphate synthase</fullName>
        <ecNumber evidence="1">4.6.1.17</ecNumber>
    </recommendedName>
    <alternativeName>
        <fullName evidence="1">Molybdenum cofactor biosynthesis protein C</fullName>
    </alternativeName>
</protein>
<proteinExistence type="inferred from homology"/>